<proteinExistence type="inferred from homology"/>
<accession>Q0HRC1</accession>
<comment type="function">
    <text evidence="1">Displays ATPase and GTPase activities.</text>
</comment>
<comment type="similarity">
    <text evidence="1">Belongs to the RapZ-like family.</text>
</comment>
<protein>
    <recommendedName>
        <fullName evidence="1">Nucleotide-binding protein Shewmr7_3352</fullName>
    </recommendedName>
</protein>
<name>Y3352_SHESR</name>
<keyword id="KW-0067">ATP-binding</keyword>
<keyword id="KW-0342">GTP-binding</keyword>
<keyword id="KW-0547">Nucleotide-binding</keyword>
<dbReference type="EMBL" id="CP000444">
    <property type="protein sequence ID" value="ABI44334.1"/>
    <property type="molecule type" value="Genomic_DNA"/>
</dbReference>
<dbReference type="SMR" id="Q0HRC1"/>
<dbReference type="KEGG" id="shm:Shewmr7_3352"/>
<dbReference type="HOGENOM" id="CLU_059558_1_1_6"/>
<dbReference type="GO" id="GO:0005524">
    <property type="term" value="F:ATP binding"/>
    <property type="evidence" value="ECO:0007669"/>
    <property type="project" value="UniProtKB-UniRule"/>
</dbReference>
<dbReference type="GO" id="GO:0005525">
    <property type="term" value="F:GTP binding"/>
    <property type="evidence" value="ECO:0007669"/>
    <property type="project" value="UniProtKB-UniRule"/>
</dbReference>
<dbReference type="HAMAP" id="MF_00636">
    <property type="entry name" value="RapZ_like"/>
    <property type="match status" value="1"/>
</dbReference>
<dbReference type="InterPro" id="IPR027417">
    <property type="entry name" value="P-loop_NTPase"/>
</dbReference>
<dbReference type="InterPro" id="IPR005337">
    <property type="entry name" value="RapZ-like"/>
</dbReference>
<dbReference type="InterPro" id="IPR053930">
    <property type="entry name" value="RapZ-like_N"/>
</dbReference>
<dbReference type="InterPro" id="IPR053931">
    <property type="entry name" value="RapZ_C"/>
</dbReference>
<dbReference type="NCBIfam" id="NF003828">
    <property type="entry name" value="PRK05416.1"/>
    <property type="match status" value="1"/>
</dbReference>
<dbReference type="PANTHER" id="PTHR30448">
    <property type="entry name" value="RNASE ADAPTER PROTEIN RAPZ"/>
    <property type="match status" value="1"/>
</dbReference>
<dbReference type="PANTHER" id="PTHR30448:SF0">
    <property type="entry name" value="RNASE ADAPTER PROTEIN RAPZ"/>
    <property type="match status" value="1"/>
</dbReference>
<dbReference type="Pfam" id="PF22740">
    <property type="entry name" value="PapZ_C"/>
    <property type="match status" value="1"/>
</dbReference>
<dbReference type="Pfam" id="PF03668">
    <property type="entry name" value="RapZ-like_N"/>
    <property type="match status" value="1"/>
</dbReference>
<dbReference type="PIRSF" id="PIRSF005052">
    <property type="entry name" value="P-loopkin"/>
    <property type="match status" value="1"/>
</dbReference>
<dbReference type="SUPFAM" id="SSF52540">
    <property type="entry name" value="P-loop containing nucleoside triphosphate hydrolases"/>
    <property type="match status" value="1"/>
</dbReference>
<sequence length="284" mass="32294">MKLVIVSGRSGSGKSVALRVLEDLGYYCVDNLPLPLIGSLLEQLKGSNDLVAISVDVRNLPEQDKVLVKQLASLPEGTELTSFFLNSSDKVLLKRYSETRRLHPLSKSRVSLQEAIKLEGKLLEPLSQQMDHYIDTSNLNIYELSDQVRQILLGSVDKELVINFESFGFKHGMPTEADFMFDVRFLPNPHWEPELRPLTGLDEPVAEFLNRQPLVNKFIWQIENLLETWLPHLERNNRSYLTIAIGCTGGQHRSVYVAEQLAKRFSNGKHKVNARHRELNHAKA</sequence>
<reference key="1">
    <citation type="submission" date="2006-08" db="EMBL/GenBank/DDBJ databases">
        <title>Complete sequence of chromosome 1 of Shewanella sp. MR-7.</title>
        <authorList>
            <person name="Copeland A."/>
            <person name="Lucas S."/>
            <person name="Lapidus A."/>
            <person name="Barry K."/>
            <person name="Detter J.C."/>
            <person name="Glavina del Rio T."/>
            <person name="Hammon N."/>
            <person name="Israni S."/>
            <person name="Dalin E."/>
            <person name="Tice H."/>
            <person name="Pitluck S."/>
            <person name="Kiss H."/>
            <person name="Brettin T."/>
            <person name="Bruce D."/>
            <person name="Han C."/>
            <person name="Tapia R."/>
            <person name="Gilna P."/>
            <person name="Schmutz J."/>
            <person name="Larimer F."/>
            <person name="Land M."/>
            <person name="Hauser L."/>
            <person name="Kyrpides N."/>
            <person name="Mikhailova N."/>
            <person name="Nealson K."/>
            <person name="Konstantinidis K."/>
            <person name="Klappenbach J."/>
            <person name="Tiedje J."/>
            <person name="Richardson P."/>
        </authorList>
    </citation>
    <scope>NUCLEOTIDE SEQUENCE [LARGE SCALE GENOMIC DNA]</scope>
    <source>
        <strain>MR-7</strain>
    </source>
</reference>
<evidence type="ECO:0000255" key="1">
    <source>
        <dbReference type="HAMAP-Rule" id="MF_00636"/>
    </source>
</evidence>
<organism>
    <name type="scientific">Shewanella sp. (strain MR-7)</name>
    <dbReference type="NCBI Taxonomy" id="60481"/>
    <lineage>
        <taxon>Bacteria</taxon>
        <taxon>Pseudomonadati</taxon>
        <taxon>Pseudomonadota</taxon>
        <taxon>Gammaproteobacteria</taxon>
        <taxon>Alteromonadales</taxon>
        <taxon>Shewanellaceae</taxon>
        <taxon>Shewanella</taxon>
    </lineage>
</organism>
<gene>
    <name type="ordered locus">Shewmr7_3352</name>
</gene>
<feature type="chain" id="PRO_1000056860" description="Nucleotide-binding protein Shewmr7_3352">
    <location>
        <begin position="1"/>
        <end position="284"/>
    </location>
</feature>
<feature type="binding site" evidence="1">
    <location>
        <begin position="8"/>
        <end position="15"/>
    </location>
    <ligand>
        <name>ATP</name>
        <dbReference type="ChEBI" id="CHEBI:30616"/>
    </ligand>
</feature>
<feature type="binding site" evidence="1">
    <location>
        <begin position="56"/>
        <end position="59"/>
    </location>
    <ligand>
        <name>GTP</name>
        <dbReference type="ChEBI" id="CHEBI:37565"/>
    </ligand>
</feature>